<gene>
    <name type="primary">CESA9</name>
    <name type="ORF">OsI_030371</name>
</gene>
<proteinExistence type="evidence at transcript level"/>
<protein>
    <recommendedName>
        <fullName>Cellulose synthase A catalytic subunit 9 [UDP-forming]</fullName>
        <ecNumber evidence="7">2.4.1.12</ecNumber>
    </recommendedName>
    <alternativeName>
        <fullName>OsCesA9</fullName>
    </alternativeName>
</protein>
<dbReference type="EC" id="2.4.1.12" evidence="7"/>
<dbReference type="EMBL" id="CM000134">
    <property type="protein sequence ID" value="EAZ09139.1"/>
    <property type="molecule type" value="Genomic_DNA"/>
</dbReference>
<dbReference type="SMR" id="A2Z1C8"/>
<dbReference type="STRING" id="39946.A2Z1C8"/>
<dbReference type="GlyCosmos" id="A2Z1C8">
    <property type="glycosylation" value="1 site, No reported glycans"/>
</dbReference>
<dbReference type="EnsemblPlants" id="BGIOSGA030777-TA">
    <property type="protein sequence ID" value="BGIOSGA030777-PA"/>
    <property type="gene ID" value="BGIOSGA030777"/>
</dbReference>
<dbReference type="EnsemblPlants" id="OsGoSa_09g0010710.01">
    <property type="protein sequence ID" value="OsGoSa_09g0010710.01"/>
    <property type="gene ID" value="OsGoSa_09g0010710"/>
</dbReference>
<dbReference type="EnsemblPlants" id="OsIR64_09g0010800.01">
    <property type="protein sequence ID" value="OsIR64_09g0010800.01"/>
    <property type="gene ID" value="OsIR64_09g0010800"/>
</dbReference>
<dbReference type="EnsemblPlants" id="OsKYG_09g0010550.01">
    <property type="protein sequence ID" value="OsKYG_09g0010550.01"/>
    <property type="gene ID" value="OsKYG_09g0010550"/>
</dbReference>
<dbReference type="EnsemblPlants" id="OsLaMu_09g0010550.01">
    <property type="protein sequence ID" value="OsLaMu_09g0010550.01"/>
    <property type="gene ID" value="OsLaMu_09g0010550"/>
</dbReference>
<dbReference type="EnsemblPlants" id="OsLima_09g0010760.01">
    <property type="protein sequence ID" value="OsLima_09g0010760.01"/>
    <property type="gene ID" value="OsLima_09g0010760"/>
</dbReference>
<dbReference type="EnsemblPlants" id="OsMH63_09G011170_01">
    <property type="protein sequence ID" value="OsMH63_09G011170_01"/>
    <property type="gene ID" value="OsMH63_09G011170"/>
</dbReference>
<dbReference type="EnsemblPlants" id="OsPr106_09g0010800.01">
    <property type="protein sequence ID" value="OsPr106_09g0010800.01"/>
    <property type="gene ID" value="OsPr106_09g0010800"/>
</dbReference>
<dbReference type="EnsemblPlants" id="OsZS97_09G010730_01">
    <property type="protein sequence ID" value="OsZS97_09G010730_01"/>
    <property type="gene ID" value="OsZS97_09G010730"/>
</dbReference>
<dbReference type="Gramene" id="BGIOSGA030777-TA">
    <property type="protein sequence ID" value="BGIOSGA030777-PA"/>
    <property type="gene ID" value="BGIOSGA030777"/>
</dbReference>
<dbReference type="Gramene" id="OsGoSa_09g0010710.01">
    <property type="protein sequence ID" value="OsGoSa_09g0010710.01"/>
    <property type="gene ID" value="OsGoSa_09g0010710"/>
</dbReference>
<dbReference type="Gramene" id="OsIR64_09g0010800.01">
    <property type="protein sequence ID" value="OsIR64_09g0010800.01"/>
    <property type="gene ID" value="OsIR64_09g0010800"/>
</dbReference>
<dbReference type="Gramene" id="OsKYG_09g0010550.01">
    <property type="protein sequence ID" value="OsKYG_09g0010550.01"/>
    <property type="gene ID" value="OsKYG_09g0010550"/>
</dbReference>
<dbReference type="Gramene" id="OsLaMu_09g0010550.01">
    <property type="protein sequence ID" value="OsLaMu_09g0010550.01"/>
    <property type="gene ID" value="OsLaMu_09g0010550"/>
</dbReference>
<dbReference type="Gramene" id="OsLima_09g0010760.01">
    <property type="protein sequence ID" value="OsLima_09g0010760.01"/>
    <property type="gene ID" value="OsLima_09g0010760"/>
</dbReference>
<dbReference type="Gramene" id="OsMH63_09G011170_01">
    <property type="protein sequence ID" value="OsMH63_09G011170_01"/>
    <property type="gene ID" value="OsMH63_09G011170"/>
</dbReference>
<dbReference type="Gramene" id="OsPr106_09g0010800.01">
    <property type="protein sequence ID" value="OsPr106_09g0010800.01"/>
    <property type="gene ID" value="OsPr106_09g0010800"/>
</dbReference>
<dbReference type="Gramene" id="OsZS97_09G010730_01">
    <property type="protein sequence ID" value="OsZS97_09G010730_01"/>
    <property type="gene ID" value="OsZS97_09G010730"/>
</dbReference>
<dbReference type="HOGENOM" id="CLU_001418_0_1_1"/>
<dbReference type="OMA" id="NGQVCEI"/>
<dbReference type="OrthoDB" id="2161379at2759"/>
<dbReference type="UniPathway" id="UPA00695"/>
<dbReference type="Proteomes" id="UP000007015">
    <property type="component" value="Chromosome 9"/>
</dbReference>
<dbReference type="GO" id="GO:0005886">
    <property type="term" value="C:plasma membrane"/>
    <property type="evidence" value="ECO:0007669"/>
    <property type="project" value="UniProtKB-SubCell"/>
</dbReference>
<dbReference type="GO" id="GO:0016760">
    <property type="term" value="F:cellulose synthase (UDP-forming) activity"/>
    <property type="evidence" value="ECO:0007669"/>
    <property type="project" value="UniProtKB-EC"/>
</dbReference>
<dbReference type="GO" id="GO:0008270">
    <property type="term" value="F:zinc ion binding"/>
    <property type="evidence" value="ECO:0007669"/>
    <property type="project" value="UniProtKB-KW"/>
</dbReference>
<dbReference type="GO" id="GO:0071555">
    <property type="term" value="P:cell wall organization"/>
    <property type="evidence" value="ECO:0007669"/>
    <property type="project" value="UniProtKB-KW"/>
</dbReference>
<dbReference type="GO" id="GO:0030244">
    <property type="term" value="P:cellulose biosynthetic process"/>
    <property type="evidence" value="ECO:0000315"/>
    <property type="project" value="UniProtKB"/>
</dbReference>
<dbReference type="GO" id="GO:0009834">
    <property type="term" value="P:plant-type secondary cell wall biogenesis"/>
    <property type="evidence" value="ECO:0000315"/>
    <property type="project" value="UniProtKB"/>
</dbReference>
<dbReference type="CDD" id="cd16617">
    <property type="entry name" value="mRING-HC-C4C4_CesA"/>
    <property type="match status" value="1"/>
</dbReference>
<dbReference type="FunFam" id="3.30.40.10:FF:000031">
    <property type="entry name" value="Cellulose synthase"/>
    <property type="match status" value="1"/>
</dbReference>
<dbReference type="FunFam" id="3.90.550.10:FF:000009">
    <property type="entry name" value="Cellulose synthase"/>
    <property type="match status" value="1"/>
</dbReference>
<dbReference type="Gene3D" id="3.90.550.10">
    <property type="entry name" value="Spore Coat Polysaccharide Biosynthesis Protein SpsA, Chain A"/>
    <property type="match status" value="1"/>
</dbReference>
<dbReference type="Gene3D" id="3.30.40.10">
    <property type="entry name" value="Zinc/RING finger domain, C3HC4 (zinc finger)"/>
    <property type="match status" value="1"/>
</dbReference>
<dbReference type="InterPro" id="IPR005150">
    <property type="entry name" value="Cellulose_synth"/>
</dbReference>
<dbReference type="InterPro" id="IPR027934">
    <property type="entry name" value="CES_Znf_RING"/>
</dbReference>
<dbReference type="InterPro" id="IPR029044">
    <property type="entry name" value="Nucleotide-diphossugar_trans"/>
</dbReference>
<dbReference type="InterPro" id="IPR001841">
    <property type="entry name" value="Znf_RING"/>
</dbReference>
<dbReference type="InterPro" id="IPR013083">
    <property type="entry name" value="Znf_RING/FYVE/PHD"/>
</dbReference>
<dbReference type="PANTHER" id="PTHR13301">
    <property type="entry name" value="X-BOX TRANSCRIPTION FACTOR-RELATED"/>
    <property type="match status" value="1"/>
</dbReference>
<dbReference type="Pfam" id="PF03552">
    <property type="entry name" value="Cellulose_synt"/>
    <property type="match status" value="1"/>
</dbReference>
<dbReference type="Pfam" id="PF14569">
    <property type="entry name" value="zf-UDP"/>
    <property type="match status" value="1"/>
</dbReference>
<dbReference type="SUPFAM" id="SSF53448">
    <property type="entry name" value="Nucleotide-diphospho-sugar transferases"/>
    <property type="match status" value="1"/>
</dbReference>
<dbReference type="SUPFAM" id="SSF57850">
    <property type="entry name" value="RING/U-box"/>
    <property type="match status" value="1"/>
</dbReference>
<dbReference type="PROSITE" id="PS50089">
    <property type="entry name" value="ZF_RING_2"/>
    <property type="match status" value="1"/>
</dbReference>
<organism>
    <name type="scientific">Oryza sativa subsp. indica</name>
    <name type="common">Rice</name>
    <dbReference type="NCBI Taxonomy" id="39946"/>
    <lineage>
        <taxon>Eukaryota</taxon>
        <taxon>Viridiplantae</taxon>
        <taxon>Streptophyta</taxon>
        <taxon>Embryophyta</taxon>
        <taxon>Tracheophyta</taxon>
        <taxon>Spermatophyta</taxon>
        <taxon>Magnoliopsida</taxon>
        <taxon>Liliopsida</taxon>
        <taxon>Poales</taxon>
        <taxon>Poaceae</taxon>
        <taxon>BOP clade</taxon>
        <taxon>Oryzoideae</taxon>
        <taxon>Oryzeae</taxon>
        <taxon>Oryzinae</taxon>
        <taxon>Oryza</taxon>
        <taxon>Oryza sativa</taxon>
    </lineage>
</organism>
<comment type="function">
    <text evidence="2 6">Catalytic subunit of cellulose synthase terminal complexes ('rosettes'), required for beta-1,4-glucan microfibril crystallization, a major mechanism of the cell wall formation (By similarity). Involved in the secondary cell wall formation.</text>
</comment>
<comment type="catalytic activity">
    <reaction evidence="7">
        <text>[(1-&gt;4)-beta-D-glucosyl](n) + UDP-alpha-D-glucose = [(1-&gt;4)-beta-D-glucosyl](n+1) + UDP + H(+)</text>
        <dbReference type="Rhea" id="RHEA:19929"/>
        <dbReference type="Rhea" id="RHEA-COMP:10033"/>
        <dbReference type="Rhea" id="RHEA-COMP:10034"/>
        <dbReference type="ChEBI" id="CHEBI:15378"/>
        <dbReference type="ChEBI" id="CHEBI:18246"/>
        <dbReference type="ChEBI" id="CHEBI:58223"/>
        <dbReference type="ChEBI" id="CHEBI:58885"/>
        <dbReference type="EC" id="2.4.1.12"/>
    </reaction>
</comment>
<comment type="cofactor">
    <cofactor evidence="1">
        <name>Mn(2+)</name>
        <dbReference type="ChEBI" id="CHEBI:29035"/>
    </cofactor>
</comment>
<comment type="cofactor">
    <cofactor evidence="2">
        <name>Zn(2+)</name>
        <dbReference type="ChEBI" id="CHEBI:29105"/>
    </cofactor>
    <text evidence="2">Binds 2 Zn(2+) ions per subunit.</text>
</comment>
<comment type="pathway">
    <text>Glycan metabolism; plant cellulose biosynthesis.</text>
</comment>
<comment type="subcellular location">
    <subcellularLocation>
        <location evidence="7">Cell membrane</location>
        <topology evidence="7">Multi-pass membrane protein</topology>
    </subcellularLocation>
</comment>
<comment type="disruption phenotype">
    <text evidence="6">Plants develop a brittle culm (bc) phenotype with a reduction of up to 90% percent of cellulose content in culm.</text>
</comment>
<comment type="similarity">
    <text evidence="7">Belongs to the glycosyltransferase 2 family. Plant cellulose synthase subfamily.</text>
</comment>
<keyword id="KW-1003">Cell membrane</keyword>
<keyword id="KW-0961">Cell wall biogenesis/degradation</keyword>
<keyword id="KW-0135">Cellulose biosynthesis</keyword>
<keyword id="KW-0175">Coiled coil</keyword>
<keyword id="KW-0325">Glycoprotein</keyword>
<keyword id="KW-0328">Glycosyltransferase</keyword>
<keyword id="KW-0464">Manganese</keyword>
<keyword id="KW-0472">Membrane</keyword>
<keyword id="KW-0479">Metal-binding</keyword>
<keyword id="KW-1185">Reference proteome</keyword>
<keyword id="KW-0808">Transferase</keyword>
<keyword id="KW-0812">Transmembrane</keyword>
<keyword id="KW-1133">Transmembrane helix</keyword>
<keyword id="KW-0862">Zinc</keyword>
<keyword id="KW-0863">Zinc-finger</keyword>
<accession>A2Z1C8</accession>
<evidence type="ECO:0000250" key="1">
    <source>
        <dbReference type="UniProtKB" id="Q941L0"/>
    </source>
</evidence>
<evidence type="ECO:0000250" key="2">
    <source>
        <dbReference type="UniProtKB" id="Q9SWW6"/>
    </source>
</evidence>
<evidence type="ECO:0000255" key="3"/>
<evidence type="ECO:0000255" key="4">
    <source>
        <dbReference type="PROSITE-ProRule" id="PRU00175"/>
    </source>
</evidence>
<evidence type="ECO:0000255" key="5">
    <source>
        <dbReference type="PROSITE-ProRule" id="PRU00498"/>
    </source>
</evidence>
<evidence type="ECO:0000269" key="6">
    <source>
    </source>
</evidence>
<evidence type="ECO:0000305" key="7"/>
<sequence length="1055" mass="118697">MEASAGLVAGSHNRNELVLIRGHEEPKPLRALSGQVCEICGDEVGRTVDGDLFVACNECGFPVCRPCYEYERREGTQNCPQCKTRYKRLKGSPRVPGDEDEEDIDDLEHEFNIDDEKQKQLQQDQDGMQNSHITEAMLHGKMSYGRGPDDGDGNSTPLPPIITGARSVPVSGEFPISNSHGHGEFSSSLHKRIHPYPVSEPGSAKWDEKKEVSWKERMDDWKSKQGIVAGGAPDPDDYDADVPLNDEARQPLSRKVSIASSKVNPYRMVIILRLVVLGFFLRYRILHPVPDAIPLWLTSIICEIWFAVSWILDQFPKWYPIDRETYLDRLSLRYEREGEPSLLSAVDLFVSTVDPLKEPPLVTANTVLSILAVDYPVDKVSCYVSDDGASMLTFESLSETAEFARKWVPFCKKFSIEPRAPEFYFSQKVDYLKDKVHPNFVQERRAMKREYEEFKVRINALVAKAQKVPAEGWIMKDGTPWPGNNTRDHPGMIQVFLGHSGGHDTEGNELPRLVYVSREKRPGFQHHKKAGAMNALIRVSAVLTNAPFMLNLDCDHYINNSKAIREAMCFLMDPQVGRKVCYVQFPQRFDGIDVHDRYANRNTVFFDINMKGLDGIQGPVYVGTGCVFRRQALYGYNPPKGPKRPKMVTCDCCPCFGRKKRKHGKDGLPEAVAADGGMDSDKEMLMSQMNFEKRFGQSAAFVTSTLMEEGGVPPSSSPAALLKEAIHVISCGYEDKTDWGLELGWIYGSITEDILTGFKMHCRGWRSVYCMPKRAAFKGSAPINLSDRLNQVLRWALGSVEIFFSRHSPLLYGYKNGNLKWLERFSYINTTIYPFTSLPLLAYCTLPAVCLLTGKFIMPPISTFASLFFIALFISIFATGILEMRWSGVSIEEWWRNEQFWVIGGVSAHLFAVVQGLLKVLAGIDTNFTVTSKATGDEDDEFAELYAFKWTTLLIPPTTLLILNIIGVVAGVSDAINNGSEAWGPLFGKLFFAFWVIVHLYPFLKGLMGRQNRTPTIVVIWSVLLASIFSLLWVRIDPFTIKARGPDVRQCGINC</sequence>
<feature type="chain" id="PRO_0000319369" description="Cellulose synthase A catalytic subunit 9 [UDP-forming]">
    <location>
        <begin position="1"/>
        <end position="1055"/>
    </location>
</feature>
<feature type="topological domain" description="Cytoplasmic" evidence="3">
    <location>
        <begin position="1"/>
        <end position="268"/>
    </location>
</feature>
<feature type="transmembrane region" description="Helical" evidence="3">
    <location>
        <begin position="269"/>
        <end position="289"/>
    </location>
</feature>
<feature type="topological domain" description="Extracellular" evidence="3">
    <location>
        <begin position="290"/>
        <end position="291"/>
    </location>
</feature>
<feature type="transmembrane region" description="Helical" evidence="3">
    <location>
        <begin position="292"/>
        <end position="312"/>
    </location>
</feature>
<feature type="topological domain" description="Cytoplasmic" evidence="3">
    <location>
        <begin position="313"/>
        <end position="831"/>
    </location>
</feature>
<feature type="transmembrane region" description="Helical" evidence="3">
    <location>
        <begin position="832"/>
        <end position="852"/>
    </location>
</feature>
<feature type="topological domain" description="Extracellular" evidence="3">
    <location>
        <begin position="853"/>
        <end position="860"/>
    </location>
</feature>
<feature type="transmembrane region" description="Helical" evidence="3">
    <location>
        <begin position="861"/>
        <end position="881"/>
    </location>
</feature>
<feature type="topological domain" description="Cytoplasmic" evidence="3">
    <location>
        <begin position="882"/>
        <end position="899"/>
    </location>
</feature>
<feature type="transmembrane region" description="Helical" evidence="3">
    <location>
        <begin position="900"/>
        <end position="920"/>
    </location>
</feature>
<feature type="topological domain" description="Extracellular" evidence="3">
    <location>
        <begin position="921"/>
        <end position="951"/>
    </location>
</feature>
<feature type="transmembrane region" description="Helical" evidence="3">
    <location>
        <begin position="952"/>
        <end position="972"/>
    </location>
</feature>
<feature type="topological domain" description="Cytoplasmic" evidence="3">
    <location>
        <begin position="973"/>
        <end position="983"/>
    </location>
</feature>
<feature type="transmembrane region" description="Helical" evidence="3">
    <location>
        <begin position="984"/>
        <end position="1004"/>
    </location>
</feature>
<feature type="topological domain" description="Extracellular" evidence="3">
    <location>
        <begin position="1005"/>
        <end position="1013"/>
    </location>
</feature>
<feature type="transmembrane region" description="Helical" evidence="3">
    <location>
        <begin position="1014"/>
        <end position="1034"/>
    </location>
</feature>
<feature type="topological domain" description="Cytoplasmic" evidence="3">
    <location>
        <begin position="1035"/>
        <end position="1055"/>
    </location>
</feature>
<feature type="zinc finger region" description="RING-type; degenerate" evidence="4">
    <location>
        <begin position="37"/>
        <end position="83"/>
    </location>
</feature>
<feature type="coiled-coil region" evidence="3">
    <location>
        <begin position="439"/>
        <end position="468"/>
    </location>
</feature>
<feature type="active site" evidence="3">
    <location>
        <position position="387"/>
    </location>
</feature>
<feature type="active site" evidence="3">
    <location>
        <position position="753"/>
    </location>
</feature>
<feature type="binding site" evidence="2">
    <location>
        <position position="37"/>
    </location>
    <ligand>
        <name>Zn(2+)</name>
        <dbReference type="ChEBI" id="CHEBI:29105"/>
        <label>1</label>
    </ligand>
</feature>
<feature type="binding site" evidence="2">
    <location>
        <position position="40"/>
    </location>
    <ligand>
        <name>Zn(2+)</name>
        <dbReference type="ChEBI" id="CHEBI:29105"/>
        <label>1</label>
    </ligand>
</feature>
<feature type="binding site" evidence="2">
    <location>
        <position position="56"/>
    </location>
    <ligand>
        <name>Zn(2+)</name>
        <dbReference type="ChEBI" id="CHEBI:29105"/>
        <label>2</label>
    </ligand>
</feature>
<feature type="binding site" evidence="2">
    <location>
        <position position="59"/>
    </location>
    <ligand>
        <name>Zn(2+)</name>
        <dbReference type="ChEBI" id="CHEBI:29105"/>
        <label>2</label>
    </ligand>
</feature>
<feature type="binding site" evidence="2">
    <location>
        <position position="64"/>
    </location>
    <ligand>
        <name>Zn(2+)</name>
        <dbReference type="ChEBI" id="CHEBI:29105"/>
        <label>1</label>
    </ligand>
</feature>
<feature type="binding site" evidence="2">
    <location>
        <position position="67"/>
    </location>
    <ligand>
        <name>Zn(2+)</name>
        <dbReference type="ChEBI" id="CHEBI:29105"/>
        <label>1</label>
    </ligand>
</feature>
<feature type="binding site" evidence="2">
    <location>
        <position position="79"/>
    </location>
    <ligand>
        <name>Zn(2+)</name>
        <dbReference type="ChEBI" id="CHEBI:29105"/>
        <label>2</label>
    </ligand>
</feature>
<feature type="binding site" evidence="2">
    <location>
        <position position="82"/>
    </location>
    <ligand>
        <name>Zn(2+)</name>
        <dbReference type="ChEBI" id="CHEBI:29105"/>
        <label>2</label>
    </ligand>
</feature>
<feature type="binding site" evidence="1">
    <location>
        <position position="351"/>
    </location>
    <ligand>
        <name>UDP-alpha-D-glucose</name>
        <dbReference type="ChEBI" id="CHEBI:58885"/>
    </ligand>
</feature>
<feature type="binding site" evidence="1">
    <location>
        <position position="357"/>
    </location>
    <ligand>
        <name>UDP-alpha-D-glucose</name>
        <dbReference type="ChEBI" id="CHEBI:58885"/>
    </ligand>
</feature>
<feature type="binding site" evidence="1">
    <location>
        <position position="358"/>
    </location>
    <ligand>
        <name>UDP-alpha-D-glucose</name>
        <dbReference type="ChEBI" id="CHEBI:58885"/>
    </ligand>
</feature>
<feature type="binding site" evidence="1">
    <location>
        <position position="387"/>
    </location>
    <ligand>
        <name>UDP-alpha-D-glucose</name>
        <dbReference type="ChEBI" id="CHEBI:58885"/>
    </ligand>
</feature>
<feature type="binding site" evidence="1">
    <location>
        <position position="528"/>
    </location>
    <ligand>
        <name>UDP-alpha-D-glucose</name>
        <dbReference type="ChEBI" id="CHEBI:58885"/>
    </ligand>
</feature>
<feature type="binding site" evidence="1">
    <location>
        <position position="529"/>
    </location>
    <ligand>
        <name>Mn(2+)</name>
        <dbReference type="ChEBI" id="CHEBI:29035"/>
    </ligand>
</feature>
<feature type="binding site" evidence="1">
    <location>
        <position position="553"/>
    </location>
    <ligand>
        <name>Mn(2+)</name>
        <dbReference type="ChEBI" id="CHEBI:29035"/>
    </ligand>
</feature>
<feature type="glycosylation site" description="N-linked (GlcNAc...) asparagine" evidence="5">
    <location>
        <position position="927"/>
    </location>
</feature>
<name>CESA9_ORYSI</name>
<reference key="1">
    <citation type="journal article" date="2005" name="PLoS Biol.">
        <title>The genomes of Oryza sativa: a history of duplications.</title>
        <authorList>
            <person name="Yu J."/>
            <person name="Wang J."/>
            <person name="Lin W."/>
            <person name="Li S."/>
            <person name="Li H."/>
            <person name="Zhou J."/>
            <person name="Ni P."/>
            <person name="Dong W."/>
            <person name="Hu S."/>
            <person name="Zeng C."/>
            <person name="Zhang J."/>
            <person name="Zhang Y."/>
            <person name="Li R."/>
            <person name="Xu Z."/>
            <person name="Li S."/>
            <person name="Li X."/>
            <person name="Zheng H."/>
            <person name="Cong L."/>
            <person name="Lin L."/>
            <person name="Yin J."/>
            <person name="Geng J."/>
            <person name="Li G."/>
            <person name="Shi J."/>
            <person name="Liu J."/>
            <person name="Lv H."/>
            <person name="Li J."/>
            <person name="Wang J."/>
            <person name="Deng Y."/>
            <person name="Ran L."/>
            <person name="Shi X."/>
            <person name="Wang X."/>
            <person name="Wu Q."/>
            <person name="Li C."/>
            <person name="Ren X."/>
            <person name="Wang J."/>
            <person name="Wang X."/>
            <person name="Li D."/>
            <person name="Liu D."/>
            <person name="Zhang X."/>
            <person name="Ji Z."/>
            <person name="Zhao W."/>
            <person name="Sun Y."/>
            <person name="Zhang Z."/>
            <person name="Bao J."/>
            <person name="Han Y."/>
            <person name="Dong L."/>
            <person name="Ji J."/>
            <person name="Chen P."/>
            <person name="Wu S."/>
            <person name="Liu J."/>
            <person name="Xiao Y."/>
            <person name="Bu D."/>
            <person name="Tan J."/>
            <person name="Yang L."/>
            <person name="Ye C."/>
            <person name="Zhang J."/>
            <person name="Xu J."/>
            <person name="Zhou Y."/>
            <person name="Yu Y."/>
            <person name="Zhang B."/>
            <person name="Zhuang S."/>
            <person name="Wei H."/>
            <person name="Liu B."/>
            <person name="Lei M."/>
            <person name="Yu H."/>
            <person name="Li Y."/>
            <person name="Xu H."/>
            <person name="Wei S."/>
            <person name="He X."/>
            <person name="Fang L."/>
            <person name="Zhang Z."/>
            <person name="Zhang Y."/>
            <person name="Huang X."/>
            <person name="Su Z."/>
            <person name="Tong W."/>
            <person name="Li J."/>
            <person name="Tong Z."/>
            <person name="Li S."/>
            <person name="Ye J."/>
            <person name="Wang L."/>
            <person name="Fang L."/>
            <person name="Lei T."/>
            <person name="Chen C.-S."/>
            <person name="Chen H.-C."/>
            <person name="Xu Z."/>
            <person name="Li H."/>
            <person name="Huang H."/>
            <person name="Zhang F."/>
            <person name="Xu H."/>
            <person name="Li N."/>
            <person name="Zhao C."/>
            <person name="Li S."/>
            <person name="Dong L."/>
            <person name="Huang Y."/>
            <person name="Li L."/>
            <person name="Xi Y."/>
            <person name="Qi Q."/>
            <person name="Li W."/>
            <person name="Zhang B."/>
            <person name="Hu W."/>
            <person name="Zhang Y."/>
            <person name="Tian X."/>
            <person name="Jiao Y."/>
            <person name="Liang X."/>
            <person name="Jin J."/>
            <person name="Gao L."/>
            <person name="Zheng W."/>
            <person name="Hao B."/>
            <person name="Liu S.-M."/>
            <person name="Wang W."/>
            <person name="Yuan L."/>
            <person name="Cao M."/>
            <person name="McDermott J."/>
            <person name="Samudrala R."/>
            <person name="Wang J."/>
            <person name="Wong G.K.-S."/>
            <person name="Yang H."/>
        </authorList>
    </citation>
    <scope>NUCLEOTIDE SEQUENCE [LARGE SCALE GENOMIC DNA]</scope>
    <source>
        <strain>cv. 93-11</strain>
    </source>
</reference>
<reference key="2">
    <citation type="journal article" date="2003" name="Plant Physiol.">
        <title>Three distinct rice cellulose synthase catalytic subunit genes required for cellulose synthesis in the secondary wall.</title>
        <authorList>
            <person name="Tanaka K."/>
            <person name="Murata K."/>
            <person name="Yamazaki M."/>
            <person name="Onosato K."/>
            <person name="Miyao A."/>
            <person name="Hirochika H."/>
        </authorList>
    </citation>
    <scope>FUNCTION</scope>
    <scope>TISSUE SPECIFICITY</scope>
    <scope>DISRUPTION PHENOTYPE</scope>
</reference>